<organism>
    <name type="scientific">Arabidopsis thaliana</name>
    <name type="common">Mouse-ear cress</name>
    <dbReference type="NCBI Taxonomy" id="3702"/>
    <lineage>
        <taxon>Eukaryota</taxon>
        <taxon>Viridiplantae</taxon>
        <taxon>Streptophyta</taxon>
        <taxon>Embryophyta</taxon>
        <taxon>Tracheophyta</taxon>
        <taxon>Spermatophyta</taxon>
        <taxon>Magnoliopsida</taxon>
        <taxon>eudicotyledons</taxon>
        <taxon>Gunneridae</taxon>
        <taxon>Pentapetalae</taxon>
        <taxon>rosids</taxon>
        <taxon>malvids</taxon>
        <taxon>Brassicales</taxon>
        <taxon>Brassicaceae</taxon>
        <taxon>Camelineae</taxon>
        <taxon>Arabidopsis</taxon>
    </lineage>
</organism>
<gene>
    <name type="primary">PLL2</name>
    <name type="ordered locus">At5g02400</name>
    <name type="ORF">T1E22.160</name>
</gene>
<name>P2C66_ARATH</name>
<feature type="chain" id="PRO_0000301260" description="Probable protein phosphatase 2C 66">
    <location>
        <begin position="1"/>
        <end position="674"/>
    </location>
</feature>
<feature type="domain" description="PPM-type phosphatase" evidence="3">
    <location>
        <begin position="244"/>
        <end position="665"/>
    </location>
</feature>
<feature type="region of interest" description="Disordered" evidence="4">
    <location>
        <begin position="153"/>
        <end position="175"/>
    </location>
</feature>
<feature type="region of interest" description="Disordered" evidence="4">
    <location>
        <begin position="202"/>
        <end position="247"/>
    </location>
</feature>
<feature type="region of interest" description="Disordered" evidence="4">
    <location>
        <begin position="373"/>
        <end position="392"/>
    </location>
</feature>
<feature type="compositionally biased region" description="Basic and acidic residues" evidence="4">
    <location>
        <begin position="373"/>
        <end position="384"/>
    </location>
</feature>
<feature type="binding site" evidence="1">
    <location>
        <position position="282"/>
    </location>
    <ligand>
        <name>Mn(2+)</name>
        <dbReference type="ChEBI" id="CHEBI:29035"/>
        <label>1</label>
    </ligand>
</feature>
<feature type="binding site" evidence="1">
    <location>
        <position position="282"/>
    </location>
    <ligand>
        <name>Mn(2+)</name>
        <dbReference type="ChEBI" id="CHEBI:29035"/>
        <label>2</label>
    </ligand>
</feature>
<feature type="binding site" evidence="1">
    <location>
        <position position="283"/>
    </location>
    <ligand>
        <name>Mn(2+)</name>
        <dbReference type="ChEBI" id="CHEBI:29035"/>
        <label>1</label>
    </ligand>
</feature>
<feature type="binding site" evidence="1">
    <location>
        <position position="593"/>
    </location>
    <ligand>
        <name>Mn(2+)</name>
        <dbReference type="ChEBI" id="CHEBI:29035"/>
        <label>2</label>
    </ligand>
</feature>
<feature type="binding site" evidence="1">
    <location>
        <position position="656"/>
    </location>
    <ligand>
        <name>Mn(2+)</name>
        <dbReference type="ChEBI" id="CHEBI:29035"/>
        <label>2</label>
    </ligand>
</feature>
<feature type="modified residue" description="Phosphoserine" evidence="2">
    <location>
        <position position="125"/>
    </location>
</feature>
<comment type="catalytic activity">
    <reaction>
        <text>O-phospho-L-seryl-[protein] + H2O = L-seryl-[protein] + phosphate</text>
        <dbReference type="Rhea" id="RHEA:20629"/>
        <dbReference type="Rhea" id="RHEA-COMP:9863"/>
        <dbReference type="Rhea" id="RHEA-COMP:11604"/>
        <dbReference type="ChEBI" id="CHEBI:15377"/>
        <dbReference type="ChEBI" id="CHEBI:29999"/>
        <dbReference type="ChEBI" id="CHEBI:43474"/>
        <dbReference type="ChEBI" id="CHEBI:83421"/>
        <dbReference type="EC" id="3.1.3.16"/>
    </reaction>
</comment>
<comment type="catalytic activity">
    <reaction>
        <text>O-phospho-L-threonyl-[protein] + H2O = L-threonyl-[protein] + phosphate</text>
        <dbReference type="Rhea" id="RHEA:47004"/>
        <dbReference type="Rhea" id="RHEA-COMP:11060"/>
        <dbReference type="Rhea" id="RHEA-COMP:11605"/>
        <dbReference type="ChEBI" id="CHEBI:15377"/>
        <dbReference type="ChEBI" id="CHEBI:30013"/>
        <dbReference type="ChEBI" id="CHEBI:43474"/>
        <dbReference type="ChEBI" id="CHEBI:61977"/>
        <dbReference type="EC" id="3.1.3.16"/>
    </reaction>
</comment>
<comment type="cofactor">
    <cofactor evidence="1">
        <name>Mg(2+)</name>
        <dbReference type="ChEBI" id="CHEBI:18420"/>
    </cofactor>
    <cofactor evidence="1">
        <name>Mn(2+)</name>
        <dbReference type="ChEBI" id="CHEBI:29035"/>
    </cofactor>
    <text evidence="1">Binds 2 magnesium or manganese ions per subunit.</text>
</comment>
<comment type="subcellular location">
    <subcellularLocation>
        <location evidence="6">Nucleus</location>
    </subcellularLocation>
</comment>
<comment type="tissue specificity">
    <text evidence="5">Expressed at low level in seedlings, roots, leaves, stems, young inflorescences, flowers and siliques.</text>
</comment>
<comment type="domain">
    <text>The conserved PP2C phosphatase domain (244-663) is interrupted by an insertion of approximately 100 amino acids.</text>
</comment>
<comment type="disruption phenotype">
    <text evidence="5">No visible phenotype.</text>
</comment>
<comment type="similarity">
    <text evidence="6">Belongs to the PP2C family.</text>
</comment>
<dbReference type="EC" id="3.1.3.16"/>
<dbReference type="EMBL" id="AL162874">
    <property type="protein sequence ID" value="CAB85545.1"/>
    <property type="molecule type" value="Genomic_DNA"/>
</dbReference>
<dbReference type="EMBL" id="CP002688">
    <property type="protein sequence ID" value="AED90468.1"/>
    <property type="molecule type" value="Genomic_DNA"/>
</dbReference>
<dbReference type="PIR" id="T48261">
    <property type="entry name" value="T48261"/>
</dbReference>
<dbReference type="RefSeq" id="NP_195860.1">
    <property type="nucleotide sequence ID" value="NM_120318.2"/>
</dbReference>
<dbReference type="SMR" id="Q9LZ86"/>
<dbReference type="FunCoup" id="Q9LZ86">
    <property type="interactions" value="96"/>
</dbReference>
<dbReference type="STRING" id="3702.Q9LZ86"/>
<dbReference type="PaxDb" id="3702-AT5G02400.1"/>
<dbReference type="EnsemblPlants" id="AT5G02400.1">
    <property type="protein sequence ID" value="AT5G02400.1"/>
    <property type="gene ID" value="AT5G02400"/>
</dbReference>
<dbReference type="GeneID" id="830937"/>
<dbReference type="Gramene" id="AT5G02400.1">
    <property type="protein sequence ID" value="AT5G02400.1"/>
    <property type="gene ID" value="AT5G02400"/>
</dbReference>
<dbReference type="KEGG" id="ath:AT5G02400"/>
<dbReference type="Araport" id="AT5G02400"/>
<dbReference type="TAIR" id="AT5G02400">
    <property type="gene designation" value="PLL2"/>
</dbReference>
<dbReference type="eggNOG" id="KOG0700">
    <property type="taxonomic scope" value="Eukaryota"/>
</dbReference>
<dbReference type="HOGENOM" id="CLU_013173_12_1_1"/>
<dbReference type="InParanoid" id="Q9LZ86"/>
<dbReference type="OMA" id="KWRCEWE"/>
<dbReference type="PhylomeDB" id="Q9LZ86"/>
<dbReference type="PRO" id="PR:Q9LZ86"/>
<dbReference type="Proteomes" id="UP000006548">
    <property type="component" value="Chromosome 5"/>
</dbReference>
<dbReference type="ExpressionAtlas" id="Q9LZ86">
    <property type="expression patterns" value="baseline and differential"/>
</dbReference>
<dbReference type="GO" id="GO:0005634">
    <property type="term" value="C:nucleus"/>
    <property type="evidence" value="ECO:0007669"/>
    <property type="project" value="UniProtKB-SubCell"/>
</dbReference>
<dbReference type="GO" id="GO:0046872">
    <property type="term" value="F:metal ion binding"/>
    <property type="evidence" value="ECO:0007669"/>
    <property type="project" value="UniProtKB-KW"/>
</dbReference>
<dbReference type="GO" id="GO:0004722">
    <property type="term" value="F:protein serine/threonine phosphatase activity"/>
    <property type="evidence" value="ECO:0007669"/>
    <property type="project" value="UniProtKB-EC"/>
</dbReference>
<dbReference type="CDD" id="cd00143">
    <property type="entry name" value="PP2Cc"/>
    <property type="match status" value="1"/>
</dbReference>
<dbReference type="FunFam" id="3.60.40.10:FF:000050">
    <property type="entry name" value="probable protein phosphatase 2C 4"/>
    <property type="match status" value="1"/>
</dbReference>
<dbReference type="Gene3D" id="3.60.40.10">
    <property type="entry name" value="PPM-type phosphatase domain"/>
    <property type="match status" value="1"/>
</dbReference>
<dbReference type="InterPro" id="IPR015655">
    <property type="entry name" value="PP2C"/>
</dbReference>
<dbReference type="InterPro" id="IPR036457">
    <property type="entry name" value="PPM-type-like_dom_sf"/>
</dbReference>
<dbReference type="InterPro" id="IPR001932">
    <property type="entry name" value="PPM-type_phosphatase-like_dom"/>
</dbReference>
<dbReference type="PANTHER" id="PTHR13832">
    <property type="entry name" value="PROTEIN PHOSPHATASE 2C"/>
    <property type="match status" value="1"/>
</dbReference>
<dbReference type="PANTHER" id="PTHR13832:SF671">
    <property type="entry name" value="PROTEIN PHOSPHATASE 2C 66-RELATED"/>
    <property type="match status" value="1"/>
</dbReference>
<dbReference type="Pfam" id="PF00481">
    <property type="entry name" value="PP2C"/>
    <property type="match status" value="1"/>
</dbReference>
<dbReference type="SMART" id="SM00332">
    <property type="entry name" value="PP2Cc"/>
    <property type="match status" value="1"/>
</dbReference>
<dbReference type="SUPFAM" id="SSF81606">
    <property type="entry name" value="PP2C-like"/>
    <property type="match status" value="1"/>
</dbReference>
<dbReference type="PROSITE" id="PS51746">
    <property type="entry name" value="PPM_2"/>
    <property type="match status" value="1"/>
</dbReference>
<reference key="1">
    <citation type="journal article" date="2000" name="Nature">
        <title>Sequence and analysis of chromosome 5 of the plant Arabidopsis thaliana.</title>
        <authorList>
            <person name="Tabata S."/>
            <person name="Kaneko T."/>
            <person name="Nakamura Y."/>
            <person name="Kotani H."/>
            <person name="Kato T."/>
            <person name="Asamizu E."/>
            <person name="Miyajima N."/>
            <person name="Sasamoto S."/>
            <person name="Kimura T."/>
            <person name="Hosouchi T."/>
            <person name="Kawashima K."/>
            <person name="Kohara M."/>
            <person name="Matsumoto M."/>
            <person name="Matsuno A."/>
            <person name="Muraki A."/>
            <person name="Nakayama S."/>
            <person name="Nakazaki N."/>
            <person name="Naruo K."/>
            <person name="Okumura S."/>
            <person name="Shinpo S."/>
            <person name="Takeuchi C."/>
            <person name="Wada T."/>
            <person name="Watanabe A."/>
            <person name="Yamada M."/>
            <person name="Yasuda M."/>
            <person name="Sato S."/>
            <person name="de la Bastide M."/>
            <person name="Huang E."/>
            <person name="Spiegel L."/>
            <person name="Gnoj L."/>
            <person name="O'Shaughnessy A."/>
            <person name="Preston R."/>
            <person name="Habermann K."/>
            <person name="Murray J."/>
            <person name="Johnson D."/>
            <person name="Rohlfing T."/>
            <person name="Nelson J."/>
            <person name="Stoneking T."/>
            <person name="Pepin K."/>
            <person name="Spieth J."/>
            <person name="Sekhon M."/>
            <person name="Armstrong J."/>
            <person name="Becker M."/>
            <person name="Belter E."/>
            <person name="Cordum H."/>
            <person name="Cordes M."/>
            <person name="Courtney L."/>
            <person name="Courtney W."/>
            <person name="Dante M."/>
            <person name="Du H."/>
            <person name="Edwards J."/>
            <person name="Fryman J."/>
            <person name="Haakensen B."/>
            <person name="Lamar E."/>
            <person name="Latreille P."/>
            <person name="Leonard S."/>
            <person name="Meyer R."/>
            <person name="Mulvaney E."/>
            <person name="Ozersky P."/>
            <person name="Riley A."/>
            <person name="Strowmatt C."/>
            <person name="Wagner-McPherson C."/>
            <person name="Wollam A."/>
            <person name="Yoakum M."/>
            <person name="Bell M."/>
            <person name="Dedhia N."/>
            <person name="Parnell L."/>
            <person name="Shah R."/>
            <person name="Rodriguez M."/>
            <person name="Hoon See L."/>
            <person name="Vil D."/>
            <person name="Baker J."/>
            <person name="Kirchoff K."/>
            <person name="Toth K."/>
            <person name="King L."/>
            <person name="Bahret A."/>
            <person name="Miller B."/>
            <person name="Marra M.A."/>
            <person name="Martienssen R."/>
            <person name="McCombie W.R."/>
            <person name="Wilson R.K."/>
            <person name="Murphy G."/>
            <person name="Bancroft I."/>
            <person name="Volckaert G."/>
            <person name="Wambutt R."/>
            <person name="Duesterhoeft A."/>
            <person name="Stiekema W."/>
            <person name="Pohl T."/>
            <person name="Entian K.-D."/>
            <person name="Terryn N."/>
            <person name="Hartley N."/>
            <person name="Bent E."/>
            <person name="Johnson S."/>
            <person name="Langham S.-A."/>
            <person name="McCullagh B."/>
            <person name="Robben J."/>
            <person name="Grymonprez B."/>
            <person name="Zimmermann W."/>
            <person name="Ramsperger U."/>
            <person name="Wedler H."/>
            <person name="Balke K."/>
            <person name="Wedler E."/>
            <person name="Peters S."/>
            <person name="van Staveren M."/>
            <person name="Dirkse W."/>
            <person name="Mooijman P."/>
            <person name="Klein Lankhorst R."/>
            <person name="Weitzenegger T."/>
            <person name="Bothe G."/>
            <person name="Rose M."/>
            <person name="Hauf J."/>
            <person name="Berneiser S."/>
            <person name="Hempel S."/>
            <person name="Feldpausch M."/>
            <person name="Lamberth S."/>
            <person name="Villarroel R."/>
            <person name="Gielen J."/>
            <person name="Ardiles W."/>
            <person name="Bents O."/>
            <person name="Lemcke K."/>
            <person name="Kolesov G."/>
            <person name="Mayer K.F.X."/>
            <person name="Rudd S."/>
            <person name="Schoof H."/>
            <person name="Schueller C."/>
            <person name="Zaccaria P."/>
            <person name="Mewes H.-W."/>
            <person name="Bevan M."/>
            <person name="Fransz P.F."/>
        </authorList>
    </citation>
    <scope>NUCLEOTIDE SEQUENCE [LARGE SCALE GENOMIC DNA]</scope>
    <source>
        <strain>cv. Columbia</strain>
    </source>
</reference>
<reference key="2">
    <citation type="journal article" date="2017" name="Plant J.">
        <title>Araport11: a complete reannotation of the Arabidopsis thaliana reference genome.</title>
        <authorList>
            <person name="Cheng C.Y."/>
            <person name="Krishnakumar V."/>
            <person name="Chan A.P."/>
            <person name="Thibaud-Nissen F."/>
            <person name="Schobel S."/>
            <person name="Town C.D."/>
        </authorList>
    </citation>
    <scope>GENOME REANNOTATION</scope>
    <source>
        <strain>cv. Columbia</strain>
    </source>
</reference>
<reference key="3">
    <citation type="journal article" date="2005" name="Dev. Biol.">
        <title>POL and related phosphatases are dosage-sensitive regulators of meristem and organ development in Arabidopsis.</title>
        <authorList>
            <person name="Song S.-K."/>
            <person name="Clark S.E."/>
        </authorList>
    </citation>
    <scope>TISSUE SPECIFICITY</scope>
    <scope>GENE FAMILY</scope>
    <scope>NOMENCLATURE</scope>
    <scope>DISRUPTION PHENOTYPE</scope>
</reference>
<reference key="4">
    <citation type="journal article" date="2008" name="BMC Genomics">
        <title>Genome-wide and expression analysis of protein phosphatase 2C in rice and Arabidopsis.</title>
        <authorList>
            <person name="Xue T."/>
            <person name="Wang D."/>
            <person name="Zhang S."/>
            <person name="Ehlting J."/>
            <person name="Ni F."/>
            <person name="Jacab S."/>
            <person name="Zheng C."/>
            <person name="Zhong Y."/>
        </authorList>
    </citation>
    <scope>GENE FAMILY</scope>
    <scope>NOMENCLATURE</scope>
</reference>
<protein>
    <recommendedName>
        <fullName>Probable protein phosphatase 2C 66</fullName>
        <shortName>AtPP2C66</shortName>
        <ecNumber>3.1.3.16</ecNumber>
    </recommendedName>
    <alternativeName>
        <fullName>Protein POLTERGEIST-LIKE 2</fullName>
    </alternativeName>
    <alternativeName>
        <fullName>Protein phosphatase 2C PLL2</fullName>
        <shortName>PP2C PLL2</shortName>
    </alternativeName>
</protein>
<keyword id="KW-0378">Hydrolase</keyword>
<keyword id="KW-0460">Magnesium</keyword>
<keyword id="KW-0464">Manganese</keyword>
<keyword id="KW-0479">Metal-binding</keyword>
<keyword id="KW-0539">Nucleus</keyword>
<keyword id="KW-0597">Phosphoprotein</keyword>
<keyword id="KW-0904">Protein phosphatase</keyword>
<keyword id="KW-1185">Reference proteome</keyword>
<evidence type="ECO:0000250" key="1"/>
<evidence type="ECO:0000250" key="2">
    <source>
        <dbReference type="UniProtKB" id="Q8RWN7"/>
    </source>
</evidence>
<evidence type="ECO:0000255" key="3">
    <source>
        <dbReference type="PROSITE-ProRule" id="PRU01082"/>
    </source>
</evidence>
<evidence type="ECO:0000256" key="4">
    <source>
        <dbReference type="SAM" id="MobiDB-lite"/>
    </source>
</evidence>
<evidence type="ECO:0000269" key="5">
    <source>
    </source>
</evidence>
<evidence type="ECO:0000305" key="6"/>
<proteinExistence type="evidence at transcript level"/>
<accession>Q9LZ86</accession>
<sequence>MGNGVTTLTGCCTGTLAGEISRRYDVSLVHDGLGHSFCYIRPDLPGVVLPSPESPLRSDHIQETTFRSISGASVSANPSTALSGALSSDSDCPYSSAVSASAFESSGNFASLPLQPVPRGSTWQSGPIVNESGLGSAPFERRFLSGPIESGLYSGPIESTKKTEKEKPKKIRKKPKSKKNFLTFKTLFANLISNNNKPRLKKSVIEPINGSDSSDSGRLHHEPVITSSRSNENPKSDLEEEDEKQSMNSVLDVQWAQGKAGEDRVHVVVSEDNGWVFVGIYDGFSGPDAPDYLLNNLYTAVQKELNGLLWNDEKLRSLGENGMTKTGKCSDEEDPESGKENCPVINNDDAVASGARNQAKSLKWRCEWEKKSNNKTKSDNRCDQKGSNSTTTNHKDVLKALLQALRKTEDAYLELADQMVKENPELALMGSCVLVTLMKGEDVYVMNVGDSRAVLGRKPNLATGRKRQKELERIREDSSLEDKEILMNGAMRNTLVPLQLNMEHSTRIEEEVRRIKKEHPDDDCAVENDRVKGYLKVTRAFGAGFLKQPKWNDALLEMFRIDYIGTSPYITCSPSLCHHKLTSRDKFLILSSDGLYEYFSNQEAIFEVESFISAFPEGDPAQHLIQEVLLRAANKFGMDFHELLEIPQGDRRRYHDDVSVIVISLEGRIWRSSM</sequence>